<keyword id="KW-0963">Cytoplasm</keyword>
<keyword id="KW-0378">Hydrolase</keyword>
<keyword id="KW-0479">Metal-binding</keyword>
<keyword id="KW-0533">Nickel</keyword>
<keyword id="KW-1185">Reference proteome</keyword>
<sequence>MPTISRQEYVGLFGPTTGDKIRLGDTNLFIEIEKDLRGYGDESVYGGGKSLRDGMGADNRMTSENILDLVITSVTILDARQGVIKADVGIKGGRIVGIGKSGNPNMMNGVTPGMVVGVSTDAISGEHLILTAAGIDTHIHFISPQQVEHALSNGVTTFFGGGVGPTDGTNGTTVTAGPWHIHRMLRAFESLPVNVGILGKGHAAVAMPLVEQIKAGVAGLKVHEDWGATNSALRNALRVADEMDIQVAVHTDSLNEGGYVEDTIDAFEGRTIHTFHTEGAGGGHAPDIIKVASQMNVLPSSTNPTLPYGINSQAELFDMIMVCHNLNPKVPADVAFSESRVRPETIAAENVLHDMGVLSMFSSDSQAMGRVGENWLRVMQTAHAMKAARGKLPEDAAHNDNFRVLRYVAKITINPAIAQGISHVLGSVEVGKMADLVLWEPRFFGVKPKLVIKGGMINWAVMGDPNASLPTPQPTFYRPMFGALGKTLQETCVTFVSQAAMELGVKESLGLERQVMAVHNCRAISKKDMVRNAETPTIEVDAETFAVRVNGEYATVKPVRTVALNQRYFFS</sequence>
<gene>
    <name evidence="1" type="primary">ureC</name>
    <name type="ordered locus">plu2173</name>
</gene>
<name>URE1_PHOLL</name>
<accession>Q7N4Y7</accession>
<comment type="catalytic activity">
    <reaction evidence="1">
        <text>urea + 2 H2O + H(+) = hydrogencarbonate + 2 NH4(+)</text>
        <dbReference type="Rhea" id="RHEA:20557"/>
        <dbReference type="ChEBI" id="CHEBI:15377"/>
        <dbReference type="ChEBI" id="CHEBI:15378"/>
        <dbReference type="ChEBI" id="CHEBI:16199"/>
        <dbReference type="ChEBI" id="CHEBI:17544"/>
        <dbReference type="ChEBI" id="CHEBI:28938"/>
        <dbReference type="EC" id="3.5.1.5"/>
    </reaction>
</comment>
<comment type="cofactor">
    <cofactor evidence="1">
        <name>Ni cation</name>
        <dbReference type="ChEBI" id="CHEBI:25516"/>
    </cofactor>
    <text evidence="1">Binds 2 nickel ions per subunit.</text>
</comment>
<comment type="pathway">
    <text evidence="1">Nitrogen metabolism; urea degradation; CO(2) and NH(3) from urea (urease route): step 1/1.</text>
</comment>
<comment type="subunit">
    <text evidence="1">Heterotrimer of UreA (gamma), UreB (beta) and UreC (alpha) subunits. Three heterotrimers associate to form the active enzyme.</text>
</comment>
<comment type="subcellular location">
    <subcellularLocation>
        <location evidence="1">Cytoplasm</location>
    </subcellularLocation>
</comment>
<comment type="PTM">
    <text evidence="1">Carboxylation allows a single lysine to coordinate two nickel ions.</text>
</comment>
<comment type="similarity">
    <text evidence="1">Belongs to the metallo-dependent hydrolases superfamily. Urease alpha subunit family.</text>
</comment>
<protein>
    <recommendedName>
        <fullName evidence="1">Urease subunit alpha</fullName>
        <ecNumber evidence="1">3.5.1.5</ecNumber>
    </recommendedName>
    <alternativeName>
        <fullName evidence="1">Urea amidohydrolase subunit alpha</fullName>
    </alternativeName>
</protein>
<dbReference type="EC" id="3.5.1.5" evidence="1"/>
<dbReference type="EMBL" id="BX571866">
    <property type="protein sequence ID" value="CAE14466.1"/>
    <property type="molecule type" value="Genomic_DNA"/>
</dbReference>
<dbReference type="RefSeq" id="WP_011146427.1">
    <property type="nucleotide sequence ID" value="NC_005126.1"/>
</dbReference>
<dbReference type="SMR" id="Q7N4Y7"/>
<dbReference type="STRING" id="243265.plu2173"/>
<dbReference type="MEROPS" id="M38.982"/>
<dbReference type="GeneID" id="48848451"/>
<dbReference type="KEGG" id="plu:plu2173"/>
<dbReference type="eggNOG" id="COG0804">
    <property type="taxonomic scope" value="Bacteria"/>
</dbReference>
<dbReference type="HOGENOM" id="CLU_000980_0_0_6"/>
<dbReference type="OrthoDB" id="9802793at2"/>
<dbReference type="UniPathway" id="UPA00258">
    <property type="reaction ID" value="UER00370"/>
</dbReference>
<dbReference type="Proteomes" id="UP000002514">
    <property type="component" value="Chromosome"/>
</dbReference>
<dbReference type="GO" id="GO:0005737">
    <property type="term" value="C:cytoplasm"/>
    <property type="evidence" value="ECO:0007669"/>
    <property type="project" value="UniProtKB-SubCell"/>
</dbReference>
<dbReference type="GO" id="GO:0016151">
    <property type="term" value="F:nickel cation binding"/>
    <property type="evidence" value="ECO:0007669"/>
    <property type="project" value="UniProtKB-UniRule"/>
</dbReference>
<dbReference type="GO" id="GO:0009039">
    <property type="term" value="F:urease activity"/>
    <property type="evidence" value="ECO:0007669"/>
    <property type="project" value="UniProtKB-UniRule"/>
</dbReference>
<dbReference type="GO" id="GO:0043419">
    <property type="term" value="P:urea catabolic process"/>
    <property type="evidence" value="ECO:0007669"/>
    <property type="project" value="UniProtKB-UniRule"/>
</dbReference>
<dbReference type="CDD" id="cd00375">
    <property type="entry name" value="Urease_alpha"/>
    <property type="match status" value="1"/>
</dbReference>
<dbReference type="Gene3D" id="3.20.20.140">
    <property type="entry name" value="Metal-dependent hydrolases"/>
    <property type="match status" value="1"/>
</dbReference>
<dbReference type="Gene3D" id="2.30.40.10">
    <property type="entry name" value="Urease, subunit C, domain 1"/>
    <property type="match status" value="1"/>
</dbReference>
<dbReference type="HAMAP" id="MF_01953">
    <property type="entry name" value="Urease_alpha"/>
    <property type="match status" value="1"/>
</dbReference>
<dbReference type="InterPro" id="IPR006680">
    <property type="entry name" value="Amidohydro-rel"/>
</dbReference>
<dbReference type="InterPro" id="IPR011059">
    <property type="entry name" value="Metal-dep_hydrolase_composite"/>
</dbReference>
<dbReference type="InterPro" id="IPR032466">
    <property type="entry name" value="Metal_Hydrolase"/>
</dbReference>
<dbReference type="InterPro" id="IPR011612">
    <property type="entry name" value="Urease_alpha_N_dom"/>
</dbReference>
<dbReference type="InterPro" id="IPR050112">
    <property type="entry name" value="Urease_alpha_subunit"/>
</dbReference>
<dbReference type="InterPro" id="IPR017950">
    <property type="entry name" value="Urease_AS"/>
</dbReference>
<dbReference type="InterPro" id="IPR005848">
    <property type="entry name" value="Urease_asu"/>
</dbReference>
<dbReference type="InterPro" id="IPR017951">
    <property type="entry name" value="Urease_asu_c"/>
</dbReference>
<dbReference type="InterPro" id="IPR029754">
    <property type="entry name" value="Urease_Ni-bd"/>
</dbReference>
<dbReference type="NCBIfam" id="NF009686">
    <property type="entry name" value="PRK13207.1"/>
    <property type="match status" value="1"/>
</dbReference>
<dbReference type="NCBIfam" id="NF009834">
    <property type="entry name" value="PRK13309.1"/>
    <property type="match status" value="1"/>
</dbReference>
<dbReference type="NCBIfam" id="TIGR01792">
    <property type="entry name" value="urease_alph"/>
    <property type="match status" value="1"/>
</dbReference>
<dbReference type="PANTHER" id="PTHR43440">
    <property type="entry name" value="UREASE"/>
    <property type="match status" value="1"/>
</dbReference>
<dbReference type="PANTHER" id="PTHR43440:SF1">
    <property type="entry name" value="UREASE"/>
    <property type="match status" value="1"/>
</dbReference>
<dbReference type="Pfam" id="PF01979">
    <property type="entry name" value="Amidohydro_1"/>
    <property type="match status" value="1"/>
</dbReference>
<dbReference type="Pfam" id="PF00449">
    <property type="entry name" value="Urease_alpha"/>
    <property type="match status" value="1"/>
</dbReference>
<dbReference type="PRINTS" id="PR01752">
    <property type="entry name" value="UREASE"/>
</dbReference>
<dbReference type="SUPFAM" id="SSF51338">
    <property type="entry name" value="Composite domain of metallo-dependent hydrolases"/>
    <property type="match status" value="2"/>
</dbReference>
<dbReference type="SUPFAM" id="SSF51556">
    <property type="entry name" value="Metallo-dependent hydrolases"/>
    <property type="match status" value="1"/>
</dbReference>
<dbReference type="PROSITE" id="PS01120">
    <property type="entry name" value="UREASE_1"/>
    <property type="match status" value="1"/>
</dbReference>
<dbReference type="PROSITE" id="PS00145">
    <property type="entry name" value="UREASE_2"/>
    <property type="match status" value="1"/>
</dbReference>
<dbReference type="PROSITE" id="PS51368">
    <property type="entry name" value="UREASE_3"/>
    <property type="match status" value="1"/>
</dbReference>
<feature type="chain" id="PRO_0000234161" description="Urease subunit alpha">
    <location>
        <begin position="1"/>
        <end position="571"/>
    </location>
</feature>
<feature type="domain" description="Urease" evidence="1">
    <location>
        <begin position="133"/>
        <end position="571"/>
    </location>
</feature>
<feature type="active site" description="Proton donor" evidence="1">
    <location>
        <position position="324"/>
    </location>
</feature>
<feature type="binding site" evidence="1">
    <location>
        <position position="138"/>
    </location>
    <ligand>
        <name>Ni(2+)</name>
        <dbReference type="ChEBI" id="CHEBI:49786"/>
        <label>1</label>
    </ligand>
</feature>
<feature type="binding site" evidence="1">
    <location>
        <position position="140"/>
    </location>
    <ligand>
        <name>Ni(2+)</name>
        <dbReference type="ChEBI" id="CHEBI:49786"/>
        <label>1</label>
    </ligand>
</feature>
<feature type="binding site" description="via carbamate group" evidence="1">
    <location>
        <position position="221"/>
    </location>
    <ligand>
        <name>Ni(2+)</name>
        <dbReference type="ChEBI" id="CHEBI:49786"/>
        <label>1</label>
    </ligand>
</feature>
<feature type="binding site" description="via carbamate group" evidence="1">
    <location>
        <position position="221"/>
    </location>
    <ligand>
        <name>Ni(2+)</name>
        <dbReference type="ChEBI" id="CHEBI:49786"/>
        <label>2</label>
    </ligand>
</feature>
<feature type="binding site" evidence="1">
    <location>
        <position position="223"/>
    </location>
    <ligand>
        <name>substrate</name>
    </ligand>
</feature>
<feature type="binding site" evidence="1">
    <location>
        <position position="250"/>
    </location>
    <ligand>
        <name>Ni(2+)</name>
        <dbReference type="ChEBI" id="CHEBI:49786"/>
        <label>2</label>
    </ligand>
</feature>
<feature type="binding site" evidence="1">
    <location>
        <position position="276"/>
    </location>
    <ligand>
        <name>Ni(2+)</name>
        <dbReference type="ChEBI" id="CHEBI:49786"/>
        <label>2</label>
    </ligand>
</feature>
<feature type="binding site" evidence="1">
    <location>
        <position position="364"/>
    </location>
    <ligand>
        <name>Ni(2+)</name>
        <dbReference type="ChEBI" id="CHEBI:49786"/>
        <label>1</label>
    </ligand>
</feature>
<feature type="modified residue" description="N6-carboxylysine" evidence="1">
    <location>
        <position position="221"/>
    </location>
</feature>
<organism>
    <name type="scientific">Photorhabdus laumondii subsp. laumondii (strain DSM 15139 / CIP 105565 / TT01)</name>
    <name type="common">Photorhabdus luminescens subsp. laumondii</name>
    <dbReference type="NCBI Taxonomy" id="243265"/>
    <lineage>
        <taxon>Bacteria</taxon>
        <taxon>Pseudomonadati</taxon>
        <taxon>Pseudomonadota</taxon>
        <taxon>Gammaproteobacteria</taxon>
        <taxon>Enterobacterales</taxon>
        <taxon>Morganellaceae</taxon>
        <taxon>Photorhabdus</taxon>
    </lineage>
</organism>
<proteinExistence type="inferred from homology"/>
<reference key="1">
    <citation type="journal article" date="2003" name="Nat. Biotechnol.">
        <title>The genome sequence of the entomopathogenic bacterium Photorhabdus luminescens.</title>
        <authorList>
            <person name="Duchaud E."/>
            <person name="Rusniok C."/>
            <person name="Frangeul L."/>
            <person name="Buchrieser C."/>
            <person name="Givaudan A."/>
            <person name="Taourit S."/>
            <person name="Bocs S."/>
            <person name="Boursaux-Eude C."/>
            <person name="Chandler M."/>
            <person name="Charles J.-F."/>
            <person name="Dassa E."/>
            <person name="Derose R."/>
            <person name="Derzelle S."/>
            <person name="Freyssinet G."/>
            <person name="Gaudriault S."/>
            <person name="Medigue C."/>
            <person name="Lanois A."/>
            <person name="Powell K."/>
            <person name="Siguier P."/>
            <person name="Vincent R."/>
            <person name="Wingate V."/>
            <person name="Zouine M."/>
            <person name="Glaser P."/>
            <person name="Boemare N."/>
            <person name="Danchin A."/>
            <person name="Kunst F."/>
        </authorList>
    </citation>
    <scope>NUCLEOTIDE SEQUENCE [LARGE SCALE GENOMIC DNA]</scope>
    <source>
        <strain>DSM 15139 / CIP 105565 / TT01</strain>
    </source>
</reference>
<evidence type="ECO:0000255" key="1">
    <source>
        <dbReference type="HAMAP-Rule" id="MF_01953"/>
    </source>
</evidence>